<comment type="function">
    <text evidence="1">RNA chaperone that binds small regulatory RNA (sRNAs) and mRNAs to facilitate mRNA translational regulation in response to envelope stress, environmental stress and changes in metabolite concentrations. Also binds with high specificity to tRNAs.</text>
</comment>
<comment type="subunit">
    <text evidence="1">Homohexamer.</text>
</comment>
<comment type="similarity">
    <text evidence="1">Belongs to the Hfq family.</text>
</comment>
<dbReference type="EMBL" id="CP001083">
    <property type="protein sequence ID" value="ACQ53749.1"/>
    <property type="molecule type" value="Genomic_DNA"/>
</dbReference>
<dbReference type="RefSeq" id="WP_003358923.1">
    <property type="nucleotide sequence ID" value="NC_012658.1"/>
</dbReference>
<dbReference type="SMR" id="C3KX32"/>
<dbReference type="GeneID" id="92938492"/>
<dbReference type="KEGG" id="cbi:CLJ_B1975"/>
<dbReference type="HOGENOM" id="CLU_113688_0_2_9"/>
<dbReference type="Proteomes" id="UP000002333">
    <property type="component" value="Chromosome"/>
</dbReference>
<dbReference type="GO" id="GO:0005829">
    <property type="term" value="C:cytosol"/>
    <property type="evidence" value="ECO:0007669"/>
    <property type="project" value="TreeGrafter"/>
</dbReference>
<dbReference type="GO" id="GO:0003723">
    <property type="term" value="F:RNA binding"/>
    <property type="evidence" value="ECO:0007669"/>
    <property type="project" value="UniProtKB-UniRule"/>
</dbReference>
<dbReference type="GO" id="GO:0006355">
    <property type="term" value="P:regulation of DNA-templated transcription"/>
    <property type="evidence" value="ECO:0007669"/>
    <property type="project" value="InterPro"/>
</dbReference>
<dbReference type="GO" id="GO:0043487">
    <property type="term" value="P:regulation of RNA stability"/>
    <property type="evidence" value="ECO:0007669"/>
    <property type="project" value="TreeGrafter"/>
</dbReference>
<dbReference type="GO" id="GO:0045974">
    <property type="term" value="P:regulation of translation, ncRNA-mediated"/>
    <property type="evidence" value="ECO:0007669"/>
    <property type="project" value="TreeGrafter"/>
</dbReference>
<dbReference type="CDD" id="cd01716">
    <property type="entry name" value="Hfq"/>
    <property type="match status" value="1"/>
</dbReference>
<dbReference type="FunFam" id="2.30.30.100:FF:000012">
    <property type="entry name" value="RNA-binding protein Hfq"/>
    <property type="match status" value="1"/>
</dbReference>
<dbReference type="Gene3D" id="2.30.30.100">
    <property type="match status" value="1"/>
</dbReference>
<dbReference type="HAMAP" id="MF_00436">
    <property type="entry name" value="Hfq"/>
    <property type="match status" value="1"/>
</dbReference>
<dbReference type="InterPro" id="IPR005001">
    <property type="entry name" value="Hfq"/>
</dbReference>
<dbReference type="InterPro" id="IPR010920">
    <property type="entry name" value="LSM_dom_sf"/>
</dbReference>
<dbReference type="InterPro" id="IPR047575">
    <property type="entry name" value="Sm"/>
</dbReference>
<dbReference type="NCBIfam" id="TIGR02383">
    <property type="entry name" value="Hfq"/>
    <property type="match status" value="1"/>
</dbReference>
<dbReference type="NCBIfam" id="NF001602">
    <property type="entry name" value="PRK00395.1"/>
    <property type="match status" value="1"/>
</dbReference>
<dbReference type="PANTHER" id="PTHR34772">
    <property type="entry name" value="RNA-BINDING PROTEIN HFQ"/>
    <property type="match status" value="1"/>
</dbReference>
<dbReference type="PANTHER" id="PTHR34772:SF1">
    <property type="entry name" value="RNA-BINDING PROTEIN HFQ"/>
    <property type="match status" value="1"/>
</dbReference>
<dbReference type="Pfam" id="PF17209">
    <property type="entry name" value="Hfq"/>
    <property type="match status" value="1"/>
</dbReference>
<dbReference type="SUPFAM" id="SSF50182">
    <property type="entry name" value="Sm-like ribonucleoproteins"/>
    <property type="match status" value="1"/>
</dbReference>
<dbReference type="PROSITE" id="PS52002">
    <property type="entry name" value="SM"/>
    <property type="match status" value="1"/>
</dbReference>
<organism>
    <name type="scientific">Clostridium botulinum (strain 657 / Type Ba4)</name>
    <dbReference type="NCBI Taxonomy" id="515621"/>
    <lineage>
        <taxon>Bacteria</taxon>
        <taxon>Bacillati</taxon>
        <taxon>Bacillota</taxon>
        <taxon>Clostridia</taxon>
        <taxon>Eubacteriales</taxon>
        <taxon>Clostridiaceae</taxon>
        <taxon>Clostridium</taxon>
    </lineage>
</organism>
<sequence length="85" mass="9664">MTKVVNNLQDIFLNGARKNRIPVTIYLTNGFQLKGFVKGFDNFTVILDSDGKQMMIYKHAISTINPAKPLLFVQNPNGDDYKDKE</sequence>
<keyword id="KW-0694">RNA-binding</keyword>
<keyword id="KW-0346">Stress response</keyword>
<gene>
    <name evidence="1" type="primary">hfq</name>
    <name type="ordered locus">CLJ_B1975</name>
</gene>
<accession>C3KX32</accession>
<reference key="1">
    <citation type="submission" date="2008-05" db="EMBL/GenBank/DDBJ databases">
        <title>Genome sequence of Clostridium botulinum Ba4 strain 657.</title>
        <authorList>
            <person name="Shrivastava S."/>
            <person name="Brown J.L."/>
            <person name="Bruce D."/>
            <person name="Detter C."/>
            <person name="Munk C."/>
            <person name="Smith L.A."/>
            <person name="Smith T.J."/>
            <person name="Sutton G."/>
            <person name="Brettin T.S."/>
        </authorList>
    </citation>
    <scope>NUCLEOTIDE SEQUENCE [LARGE SCALE GENOMIC DNA]</scope>
    <source>
        <strain>657 / Type Ba4</strain>
    </source>
</reference>
<name>HFQ_CLOB6</name>
<evidence type="ECO:0000255" key="1">
    <source>
        <dbReference type="HAMAP-Rule" id="MF_00436"/>
    </source>
</evidence>
<evidence type="ECO:0000255" key="2">
    <source>
        <dbReference type="PROSITE-ProRule" id="PRU01346"/>
    </source>
</evidence>
<proteinExistence type="inferred from homology"/>
<feature type="chain" id="PRO_1000206098" description="RNA-binding protein Hfq">
    <location>
        <begin position="1"/>
        <end position="85"/>
    </location>
</feature>
<feature type="domain" description="Sm" evidence="2">
    <location>
        <begin position="10"/>
        <end position="70"/>
    </location>
</feature>
<protein>
    <recommendedName>
        <fullName evidence="1">RNA-binding protein Hfq</fullName>
    </recommendedName>
</protein>